<protein>
    <recommendedName>
        <fullName>Putative uncharacterized protein</fullName>
    </recommendedName>
</protein>
<reference key="1">
    <citation type="journal article" date="2004" name="Proc. Natl. Acad. Sci. U.S.A.">
        <title>The diploid genome sequence of Candida albicans.</title>
        <authorList>
            <person name="Jones T."/>
            <person name="Federspiel N.A."/>
            <person name="Chibana H."/>
            <person name="Dungan J."/>
            <person name="Kalman S."/>
            <person name="Magee B.B."/>
            <person name="Newport G."/>
            <person name="Thorstenson Y.R."/>
            <person name="Agabian N."/>
            <person name="Magee P.T."/>
            <person name="Davis R.W."/>
            <person name="Scherer S."/>
        </authorList>
    </citation>
    <scope>NUCLEOTIDE SEQUENCE [LARGE SCALE GENOMIC DNA]</scope>
    <source>
        <strain>SC5314 / ATCC MYA-2876</strain>
    </source>
</reference>
<reference key="2">
    <citation type="journal article" date="2007" name="Genome Biol.">
        <title>Assembly of the Candida albicans genome into sixteen supercontigs aligned on the eight chromosomes.</title>
        <authorList>
            <person name="van het Hoog M."/>
            <person name="Rast T.J."/>
            <person name="Martchenko M."/>
            <person name="Grindle S."/>
            <person name="Dignard D."/>
            <person name="Hogues H."/>
            <person name="Cuomo C."/>
            <person name="Berriman M."/>
            <person name="Scherer S."/>
            <person name="Magee B.B."/>
            <person name="Whiteway M."/>
            <person name="Chibana H."/>
            <person name="Nantel A."/>
            <person name="Magee P.T."/>
        </authorList>
    </citation>
    <scope>GENOME REANNOTATION</scope>
    <source>
        <strain>SC5314 / ATCC MYA-2876</strain>
    </source>
</reference>
<reference key="3">
    <citation type="journal article" date="2013" name="Genome Biol.">
        <title>Assembly of a phased diploid Candida albicans genome facilitates allele-specific measurements and provides a simple model for repeat and indel structure.</title>
        <authorList>
            <person name="Muzzey D."/>
            <person name="Schwartz K."/>
            <person name="Weissman J.S."/>
            <person name="Sherlock G."/>
        </authorList>
    </citation>
    <scope>NUCLEOTIDE SEQUENCE [LARGE SCALE GENOMIC DNA]</scope>
    <scope>GENOME REANNOTATION</scope>
    <source>
        <strain>SC5314 / ATCC MYA-2876</strain>
    </source>
</reference>
<reference key="4">
    <citation type="journal article" date="2003" name="Yeast">
        <title>Genome-wide identification of fungal GPI proteins.</title>
        <authorList>
            <person name="De Groot P.W."/>
            <person name="Hellingwerf K.J."/>
            <person name="Klis F.M."/>
        </authorList>
    </citation>
    <scope>PREDICTION OF GPI-ANCHOR</scope>
</reference>
<reference key="5">
    <citation type="journal article" date="2013" name="Antimicrob. Agents Chemother.">
        <title>Milbemycins: more than efflux inhibitors for fungal pathogens.</title>
        <authorList>
            <person name="Silva L.V."/>
            <person name="Sanguinetti M."/>
            <person name="Vandeputte P."/>
            <person name="Torelli R."/>
            <person name="Rochat B."/>
            <person name="Sanglard D."/>
        </authorList>
    </citation>
    <scope>INDUCTION</scope>
</reference>
<dbReference type="EMBL" id="CP017628">
    <property type="protein sequence ID" value="AOW30237.1"/>
    <property type="molecule type" value="Genomic_DNA"/>
</dbReference>
<dbReference type="RefSeq" id="XP_719150.2">
    <property type="nucleotide sequence ID" value="XM_714057.2"/>
</dbReference>
<dbReference type="STRING" id="237561.Q5ABW2"/>
<dbReference type="GlyCosmos" id="Q5ABW2">
    <property type="glycosylation" value="5 sites, No reported glycans"/>
</dbReference>
<dbReference type="EnsemblFungi" id="C6_03060W_A-T">
    <property type="protein sequence ID" value="C6_03060W_A-T-p1"/>
    <property type="gene ID" value="C6_03060W_A"/>
</dbReference>
<dbReference type="GeneID" id="3639271"/>
<dbReference type="KEGG" id="cal:CAALFM_C603060WA"/>
<dbReference type="CGD" id="CAL0000190944">
    <property type="gene designation" value="PGA60"/>
</dbReference>
<dbReference type="VEuPathDB" id="FungiDB:C6_03060W_A"/>
<dbReference type="HOGENOM" id="CLU_370875_0_0_1"/>
<dbReference type="InParanoid" id="Q5ABW2"/>
<dbReference type="OrthoDB" id="4026272at2759"/>
<dbReference type="PRO" id="PR:Q5ABW2"/>
<dbReference type="Proteomes" id="UP000000559">
    <property type="component" value="Chromosome 6"/>
</dbReference>
<dbReference type="GO" id="GO:0005886">
    <property type="term" value="C:plasma membrane"/>
    <property type="evidence" value="ECO:0007669"/>
    <property type="project" value="UniProtKB-SubCell"/>
</dbReference>
<dbReference type="GO" id="GO:0098552">
    <property type="term" value="C:side of membrane"/>
    <property type="evidence" value="ECO:0007669"/>
    <property type="project" value="UniProtKB-KW"/>
</dbReference>
<name>PGA60_CANAL</name>
<feature type="signal peptide" evidence="1">
    <location>
        <begin position="1"/>
        <end position="18"/>
    </location>
</feature>
<feature type="chain" id="PRO_0000429960" description="Putative uncharacterized protein">
    <location>
        <begin position="19"/>
        <end position="719"/>
    </location>
</feature>
<feature type="propeptide" id="PRO_0000429961" description="Removed in mature form" evidence="1">
    <location>
        <begin position="720"/>
        <end position="741"/>
    </location>
</feature>
<feature type="region of interest" description="Disordered" evidence="2">
    <location>
        <begin position="142"/>
        <end position="300"/>
    </location>
</feature>
<feature type="region of interest" description="Disordered" evidence="2">
    <location>
        <begin position="423"/>
        <end position="528"/>
    </location>
</feature>
<feature type="region of interest" description="Disordered" evidence="2">
    <location>
        <begin position="646"/>
        <end position="681"/>
    </location>
</feature>
<feature type="compositionally biased region" description="Acidic residues" evidence="2">
    <location>
        <begin position="147"/>
        <end position="165"/>
    </location>
</feature>
<feature type="compositionally biased region" description="Low complexity" evidence="2">
    <location>
        <begin position="183"/>
        <end position="197"/>
    </location>
</feature>
<feature type="compositionally biased region" description="Low complexity" evidence="2">
    <location>
        <begin position="205"/>
        <end position="266"/>
    </location>
</feature>
<feature type="compositionally biased region" description="Acidic residues" evidence="2">
    <location>
        <begin position="423"/>
        <end position="432"/>
    </location>
</feature>
<feature type="compositionally biased region" description="Low complexity" evidence="2">
    <location>
        <begin position="433"/>
        <end position="451"/>
    </location>
</feature>
<feature type="compositionally biased region" description="Acidic residues" evidence="2">
    <location>
        <begin position="500"/>
        <end position="511"/>
    </location>
</feature>
<feature type="compositionally biased region" description="Low complexity" evidence="2">
    <location>
        <begin position="512"/>
        <end position="528"/>
    </location>
</feature>
<feature type="compositionally biased region" description="Polar residues" evidence="2">
    <location>
        <begin position="646"/>
        <end position="656"/>
    </location>
</feature>
<feature type="compositionally biased region" description="Acidic residues" evidence="2">
    <location>
        <begin position="657"/>
        <end position="671"/>
    </location>
</feature>
<feature type="lipid moiety-binding region" description="GPI-anchor amidated asparagine" evidence="1">
    <location>
        <position position="719"/>
    </location>
</feature>
<feature type="glycosylation site" description="N-linked (GlcNAc...) asparagine" evidence="1">
    <location>
        <position position="232"/>
    </location>
</feature>
<feature type="glycosylation site" description="N-linked (GlcNAc...) asparagine" evidence="1">
    <location>
        <position position="241"/>
    </location>
</feature>
<feature type="glycosylation site" description="N-linked (GlcNAc...) asparagine" evidence="1">
    <location>
        <position position="461"/>
    </location>
</feature>
<feature type="glycosylation site" description="N-linked (GlcNAc...) asparagine" evidence="1">
    <location>
        <position position="511"/>
    </location>
</feature>
<feature type="glycosylation site" description="N-linked (GlcNAc...) asparagine" evidence="1">
    <location>
        <position position="669"/>
    </location>
</feature>
<comment type="subcellular location">
    <subcellularLocation>
        <location evidence="4">Cell membrane</location>
        <topology evidence="4">Lipid-anchor</topology>
        <topology evidence="4">GPI-anchor</topology>
    </subcellularLocation>
</comment>
<comment type="induction">
    <text evidence="3">Up-regulated upon milbemycins A3 oxim derivative (A3Ox) treatment.</text>
</comment>
<keyword id="KW-1003">Cell membrane</keyword>
<keyword id="KW-0325">Glycoprotein</keyword>
<keyword id="KW-0336">GPI-anchor</keyword>
<keyword id="KW-0449">Lipoprotein</keyword>
<keyword id="KW-0472">Membrane</keyword>
<keyword id="KW-1185">Reference proteome</keyword>
<keyword id="KW-0732">Signal</keyword>
<organism>
    <name type="scientific">Candida albicans (strain SC5314 / ATCC MYA-2876)</name>
    <name type="common">Yeast</name>
    <dbReference type="NCBI Taxonomy" id="237561"/>
    <lineage>
        <taxon>Eukaryota</taxon>
        <taxon>Fungi</taxon>
        <taxon>Dikarya</taxon>
        <taxon>Ascomycota</taxon>
        <taxon>Saccharomycotina</taxon>
        <taxon>Pichiomycetes</taxon>
        <taxon>Debaryomycetaceae</taxon>
        <taxon>Candida/Lodderomyces clade</taxon>
        <taxon>Candida</taxon>
    </lineage>
</organism>
<evidence type="ECO:0000255" key="1"/>
<evidence type="ECO:0000256" key="2">
    <source>
        <dbReference type="SAM" id="MobiDB-lite"/>
    </source>
</evidence>
<evidence type="ECO:0000269" key="3">
    <source>
    </source>
</evidence>
<evidence type="ECO:0000305" key="4"/>
<proteinExistence type="evidence at protein level"/>
<gene>
    <name type="primary">PGA60</name>
    <name type="ordered locus">CAALFM_C603060WA</name>
    <name type="ORF">CaO19.13035</name>
    <name type="ORF">CaO19.5588</name>
</gene>
<accession>Q5ABW2</accession>
<accession>A0A1D8PQ20</accession>
<accession>Q5AC82</accession>
<sequence>MKTISILAFLVLARLIEANDLFQVKTIIDYQDLYLHINPNNFQVKLSHSSTDVFEFDESSNKLFCAGTNDIITYNKENCPYLMKFADESSSSVLGWSLDRQTLRFDHDLYFCGTKPPYSLLADPSGSANCRKLNIFRTVLEPKVEKEEEEEEYDGEEDDDDESLTEFESSTDFPTMTDESTEVEPSTTTESAISTTETSKDEESSTTVESTTTPKTTTTTSADSVTTTSKSNESLTTTESNESSTTTESKDSSTTTDESTPESSTTETDKTETTIEEQEEESTTSSQSEETEGPSGGNVDSTVAMVISAMFQGDRVYFYSDDKYITLLNGDLATFKIDDGYLQVNNNKWVNVNIERLLELVDNQEDATQGWIINDEGIFLVQDGFYSDSVSFSACGHDSGYRVYLGEENGCEPLNQFRIMNIEEDEIDETETTESTKTTETTKTTGPAETTDSAESTDDSNESSAPPPTEDPSDIPSATTTDEATVDPSDEQSIAPTSEPIDESTESEEPNESVTVTGDTTTDTSEQGLTTFTTETTATVTDCEDGDDSCTPRTTIRSTVITTHCPIVTKTEVETIVTDLTITLTTCIDETICEATTFVVSTTVVTTTLTTHSVVTEYVSSAHEGDGSSTIANEDKHNDAIVTPQETVAPDTNSPDADQEQPDSVEPDNETTDAPINVEDDATALISDEDTTTSTITTLIYITQSGDQPIKTPVPIFDNAANLAGSISLSSGVLLLILMLI</sequence>